<reference key="1">
    <citation type="journal article" date="2008" name="DNA Res.">
        <title>Comparative genome analysis of Lactobacillus reuteri and Lactobacillus fermentum reveal a genomic island for reuterin and cobalamin production.</title>
        <authorList>
            <person name="Morita H."/>
            <person name="Toh H."/>
            <person name="Fukuda S."/>
            <person name="Horikawa H."/>
            <person name="Oshima K."/>
            <person name="Suzuki T."/>
            <person name="Murakami M."/>
            <person name="Hisamatsu S."/>
            <person name="Kato Y."/>
            <person name="Takizawa T."/>
            <person name="Fukuoka H."/>
            <person name="Yoshimura T."/>
            <person name="Itoh K."/>
            <person name="O'Sullivan D.J."/>
            <person name="McKay L.L."/>
            <person name="Ohno H."/>
            <person name="Kikuchi J."/>
            <person name="Masaoka T."/>
            <person name="Hattori M."/>
        </authorList>
    </citation>
    <scope>NUCLEOTIDE SEQUENCE [LARGE SCALE GENOMIC DNA]</scope>
    <source>
        <strain>NBRC 3956 / LMG 18251</strain>
    </source>
</reference>
<evidence type="ECO:0000255" key="1">
    <source>
        <dbReference type="HAMAP-Rule" id="MF_01219"/>
    </source>
</evidence>
<proteinExistence type="inferred from homology"/>
<gene>
    <name evidence="1" type="primary">pyrR</name>
    <name type="ordered locus">LAF_0046</name>
</gene>
<sequence length="179" mass="20167">MAHEIVDGSSMQRALTRITYEIIEQNKGVDNLVFVGIKTRGVYLAQRLAKRMEQLEGVKVPVGSLDITLYRDDRHQPDHHVEPTVNATDVDVDINDKHVILVDDVLYTGRTVRAALDALMDLGRPKRISLAVLVDRGHRELPIRPDFVGKNIPTSNSETVHVAVEEYDGHEDISLENRK</sequence>
<feature type="chain" id="PRO_1000139198" description="Bifunctional protein PyrR">
    <location>
        <begin position="1"/>
        <end position="179"/>
    </location>
</feature>
<feature type="short sequence motif" description="PRPP-binding" evidence="1">
    <location>
        <begin position="99"/>
        <end position="111"/>
    </location>
</feature>
<organism>
    <name type="scientific">Limosilactobacillus fermentum (strain NBRC 3956 / LMG 18251)</name>
    <name type="common">Lactobacillus fermentum</name>
    <dbReference type="NCBI Taxonomy" id="334390"/>
    <lineage>
        <taxon>Bacteria</taxon>
        <taxon>Bacillati</taxon>
        <taxon>Bacillota</taxon>
        <taxon>Bacilli</taxon>
        <taxon>Lactobacillales</taxon>
        <taxon>Lactobacillaceae</taxon>
        <taxon>Limosilactobacillus</taxon>
    </lineage>
</organism>
<keyword id="KW-0328">Glycosyltransferase</keyword>
<keyword id="KW-1185">Reference proteome</keyword>
<keyword id="KW-0694">RNA-binding</keyword>
<keyword id="KW-0804">Transcription</keyword>
<keyword id="KW-0805">Transcription regulation</keyword>
<keyword id="KW-0806">Transcription termination</keyword>
<keyword id="KW-0808">Transferase</keyword>
<dbReference type="EC" id="2.4.2.9" evidence="1"/>
<dbReference type="EMBL" id="AP008937">
    <property type="protein sequence ID" value="BAG26382.1"/>
    <property type="molecule type" value="Genomic_DNA"/>
</dbReference>
<dbReference type="RefSeq" id="WP_003685686.1">
    <property type="nucleotide sequence ID" value="NC_010610.1"/>
</dbReference>
<dbReference type="SMR" id="B2GEZ3"/>
<dbReference type="GeneID" id="83715658"/>
<dbReference type="KEGG" id="lfe:LAF_0046"/>
<dbReference type="eggNOG" id="COG2065">
    <property type="taxonomic scope" value="Bacteria"/>
</dbReference>
<dbReference type="HOGENOM" id="CLU_094234_2_1_9"/>
<dbReference type="Proteomes" id="UP000001697">
    <property type="component" value="Chromosome"/>
</dbReference>
<dbReference type="GO" id="GO:0003723">
    <property type="term" value="F:RNA binding"/>
    <property type="evidence" value="ECO:0007669"/>
    <property type="project" value="UniProtKB-UniRule"/>
</dbReference>
<dbReference type="GO" id="GO:0004845">
    <property type="term" value="F:uracil phosphoribosyltransferase activity"/>
    <property type="evidence" value="ECO:0007669"/>
    <property type="project" value="UniProtKB-UniRule"/>
</dbReference>
<dbReference type="GO" id="GO:0006353">
    <property type="term" value="P:DNA-templated transcription termination"/>
    <property type="evidence" value="ECO:0007669"/>
    <property type="project" value="UniProtKB-UniRule"/>
</dbReference>
<dbReference type="CDD" id="cd06223">
    <property type="entry name" value="PRTases_typeI"/>
    <property type="match status" value="1"/>
</dbReference>
<dbReference type="FunFam" id="3.40.50.2020:FF:000020">
    <property type="entry name" value="Bifunctional protein PyrR"/>
    <property type="match status" value="1"/>
</dbReference>
<dbReference type="Gene3D" id="3.40.50.2020">
    <property type="match status" value="1"/>
</dbReference>
<dbReference type="HAMAP" id="MF_01219">
    <property type="entry name" value="PyrR"/>
    <property type="match status" value="1"/>
</dbReference>
<dbReference type="InterPro" id="IPR000836">
    <property type="entry name" value="PRibTrfase_dom"/>
</dbReference>
<dbReference type="InterPro" id="IPR029057">
    <property type="entry name" value="PRTase-like"/>
</dbReference>
<dbReference type="InterPro" id="IPR023050">
    <property type="entry name" value="PyrR"/>
</dbReference>
<dbReference type="InterPro" id="IPR050137">
    <property type="entry name" value="PyrR_bifunctional"/>
</dbReference>
<dbReference type="NCBIfam" id="NF003545">
    <property type="entry name" value="PRK05205.1-1"/>
    <property type="match status" value="1"/>
</dbReference>
<dbReference type="NCBIfam" id="NF003548">
    <property type="entry name" value="PRK05205.1-4"/>
    <property type="match status" value="1"/>
</dbReference>
<dbReference type="NCBIfam" id="NF003549">
    <property type="entry name" value="PRK05205.1-5"/>
    <property type="match status" value="1"/>
</dbReference>
<dbReference type="PANTHER" id="PTHR11608">
    <property type="entry name" value="BIFUNCTIONAL PROTEIN PYRR"/>
    <property type="match status" value="1"/>
</dbReference>
<dbReference type="PANTHER" id="PTHR11608:SF0">
    <property type="entry name" value="BIFUNCTIONAL PROTEIN PYRR"/>
    <property type="match status" value="1"/>
</dbReference>
<dbReference type="Pfam" id="PF00156">
    <property type="entry name" value="Pribosyltran"/>
    <property type="match status" value="1"/>
</dbReference>
<dbReference type="SUPFAM" id="SSF53271">
    <property type="entry name" value="PRTase-like"/>
    <property type="match status" value="1"/>
</dbReference>
<accession>B2GEZ3</accession>
<comment type="function">
    <text evidence="1">Regulates transcriptional attenuation of the pyrimidine nucleotide (pyr) operon by binding in a uridine-dependent manner to specific sites on pyr mRNA. This disrupts an antiterminator hairpin in the RNA and favors formation of a downstream transcription terminator, leading to a reduced expression of downstream genes.</text>
</comment>
<comment type="function">
    <text evidence="1">Also displays a weak uracil phosphoribosyltransferase activity which is not physiologically significant.</text>
</comment>
<comment type="catalytic activity">
    <reaction evidence="1">
        <text>UMP + diphosphate = 5-phospho-alpha-D-ribose 1-diphosphate + uracil</text>
        <dbReference type="Rhea" id="RHEA:13017"/>
        <dbReference type="ChEBI" id="CHEBI:17568"/>
        <dbReference type="ChEBI" id="CHEBI:33019"/>
        <dbReference type="ChEBI" id="CHEBI:57865"/>
        <dbReference type="ChEBI" id="CHEBI:58017"/>
        <dbReference type="EC" id="2.4.2.9"/>
    </reaction>
</comment>
<comment type="subunit">
    <text evidence="1">Homodimer and homohexamer; in equilibrium.</text>
</comment>
<comment type="similarity">
    <text evidence="1">Belongs to the purine/pyrimidine phosphoribosyltransferase family. PyrR subfamily.</text>
</comment>
<name>PYRR_LIMF3</name>
<protein>
    <recommendedName>
        <fullName evidence="1">Bifunctional protein PyrR</fullName>
    </recommendedName>
    <domain>
        <recommendedName>
            <fullName evidence="1">Pyrimidine operon regulatory protein</fullName>
        </recommendedName>
    </domain>
    <domain>
        <recommendedName>
            <fullName evidence="1">Uracil phosphoribosyltransferase</fullName>
            <shortName evidence="1">UPRTase</shortName>
            <ecNumber evidence="1">2.4.2.9</ecNumber>
        </recommendedName>
    </domain>
</protein>